<keyword id="KW-0963">Cytoplasm</keyword>
<keyword id="KW-0489">Methyltransferase</keyword>
<keyword id="KW-0694">RNA-binding</keyword>
<keyword id="KW-0698">rRNA processing</keyword>
<keyword id="KW-0949">S-adenosyl-L-methionine</keyword>
<keyword id="KW-0808">Transferase</keyword>
<proteinExistence type="inferred from homology"/>
<name>RLMKL_HAEI8</name>
<protein>
    <recommendedName>
        <fullName evidence="1">Ribosomal RNA large subunit methyltransferase K/L</fullName>
    </recommendedName>
    <domain>
        <recommendedName>
            <fullName evidence="1">23S rRNA m2G2445 methyltransferase</fullName>
            <ecNumber evidence="1">2.1.1.173</ecNumber>
        </recommendedName>
        <alternativeName>
            <fullName evidence="1">rRNA (guanine-N(2)-)-methyltransferase RlmL</fullName>
        </alternativeName>
    </domain>
    <domain>
        <recommendedName>
            <fullName evidence="1">23S rRNA m7G2069 methyltransferase</fullName>
            <ecNumber evidence="1">2.1.1.264</ecNumber>
        </recommendedName>
        <alternativeName>
            <fullName evidence="1">rRNA (guanine-N(7)-)-methyltransferase RlmK</fullName>
        </alternativeName>
    </domain>
</protein>
<reference key="1">
    <citation type="journal article" date="2005" name="J. Bacteriol.">
        <title>Genomic sequence of an otitis media isolate of nontypeable Haemophilus influenzae: comparative study with H. influenzae serotype d, strain KW20.</title>
        <authorList>
            <person name="Harrison A."/>
            <person name="Dyer D.W."/>
            <person name="Gillaspy A."/>
            <person name="Ray W.C."/>
            <person name="Mungur R."/>
            <person name="Carson M.B."/>
            <person name="Zhong H."/>
            <person name="Gipson J."/>
            <person name="Gipson M."/>
            <person name="Johnson L.S."/>
            <person name="Lewis L."/>
            <person name="Bakaletz L.O."/>
            <person name="Munson R.S. Jr."/>
        </authorList>
    </citation>
    <scope>NUCLEOTIDE SEQUENCE [LARGE SCALE GENOMIC DNA]</scope>
    <source>
        <strain>86-028NP</strain>
    </source>
</reference>
<sequence length="711" mass="81264">MKQLFATTSRGFEELLKVELTELGAQEAKVVQGGVHYQADDETLYRTLLWSRLASRILFPLIETKIYSDLDLYAAVSGFNWLGLFDERVTFFVDFNGTNQEIRHTQFGAMRVKDGIVDYFERQGKARPDVDKIQPDVRIHAYLNRENLVISLDLSGEALHLRGYREDAGQAPLRETLAAAIVLRSGWQVGSPLVDPMCGSGTLLIEAAQMEAKIAPQLYRLHWGFDFWKAHNQSAWEKVKNEAIELAEEKQREIQPHFYGFDLDHRVLKKAQKNAQNAGVSHLIKWQQGDVAALKNPRLNEVGTVICNPPYGERLGTTPALIALYSVFGQRLKKEFCGWNVSVFSSESTLLDCLRMRASRQFKAKNGPLDCVQKNYQVSERKSDEITAENELEFNRTSEVATDFANRLQKNIKKISKWAKQQGLDAYRLYDADLPEYNLAVDRYADYIVVQEYAAPKNIDENKARQRLLDAVTATLHVTGVETNKLILKVRQKQKGTNQYEKLANKGEYFYVNEYGAQLWVNLTDYLDTGLFLDHRLTRKMIGALAKGKDFLNLFAYTGSATVHAALGGAKSTTTVDMSNTYLNWAEQNLILNDIEGKQHKLIQADCLQWLEKCDRQFDLIFVDPPTFSNSKRMEDSWDVQRDHVKLMRNLKRVLSNNGTIVFSNNKRGFKMNLVALEELGLSAVEISHKTLPLDFERNKQIHNCWMIQHI</sequence>
<dbReference type="EC" id="2.1.1.173" evidence="1"/>
<dbReference type="EC" id="2.1.1.264" evidence="1"/>
<dbReference type="EMBL" id="CP000057">
    <property type="protein sequence ID" value="AAX87181.1"/>
    <property type="molecule type" value="Genomic_DNA"/>
</dbReference>
<dbReference type="RefSeq" id="WP_011271890.1">
    <property type="nucleotide sequence ID" value="NC_007146.2"/>
</dbReference>
<dbReference type="SMR" id="Q4QP66"/>
<dbReference type="GeneID" id="93219051"/>
<dbReference type="KEGG" id="hit:NTHI0203"/>
<dbReference type="HOGENOM" id="CLU_014042_2_0_6"/>
<dbReference type="Proteomes" id="UP000002525">
    <property type="component" value="Chromosome"/>
</dbReference>
<dbReference type="GO" id="GO:0005737">
    <property type="term" value="C:cytoplasm"/>
    <property type="evidence" value="ECO:0007669"/>
    <property type="project" value="UniProtKB-SubCell"/>
</dbReference>
<dbReference type="GO" id="GO:0052915">
    <property type="term" value="F:23S rRNA (guanine(2445)-N(2))-methyltransferase activity"/>
    <property type="evidence" value="ECO:0007669"/>
    <property type="project" value="UniProtKB-UniRule"/>
</dbReference>
<dbReference type="GO" id="GO:0003723">
    <property type="term" value="F:RNA binding"/>
    <property type="evidence" value="ECO:0007669"/>
    <property type="project" value="UniProtKB-KW"/>
</dbReference>
<dbReference type="GO" id="GO:0070043">
    <property type="term" value="F:rRNA (guanine-N7-)-methyltransferase activity"/>
    <property type="evidence" value="ECO:0007669"/>
    <property type="project" value="UniProtKB-UniRule"/>
</dbReference>
<dbReference type="CDD" id="cd02440">
    <property type="entry name" value="AdoMet_MTases"/>
    <property type="match status" value="2"/>
</dbReference>
<dbReference type="CDD" id="cd11715">
    <property type="entry name" value="THUMP_AdoMetMT"/>
    <property type="match status" value="1"/>
</dbReference>
<dbReference type="FunFam" id="3.30.750.80:FF:000001">
    <property type="entry name" value="Ribosomal RNA large subunit methyltransferase K/L"/>
    <property type="match status" value="1"/>
</dbReference>
<dbReference type="FunFam" id="3.40.50.150:FF:000039">
    <property type="entry name" value="Ribosomal RNA large subunit methyltransferase K/L"/>
    <property type="match status" value="1"/>
</dbReference>
<dbReference type="Gene3D" id="3.30.2130.30">
    <property type="match status" value="1"/>
</dbReference>
<dbReference type="Gene3D" id="3.30.750.80">
    <property type="entry name" value="RNA methyltransferase domain (HRMD) like"/>
    <property type="match status" value="1"/>
</dbReference>
<dbReference type="Gene3D" id="3.40.50.150">
    <property type="entry name" value="Vaccinia Virus protein VP39"/>
    <property type="match status" value="2"/>
</dbReference>
<dbReference type="HAMAP" id="MF_01858">
    <property type="entry name" value="23SrRNA_methyltr_KL"/>
    <property type="match status" value="1"/>
</dbReference>
<dbReference type="InterPro" id="IPR017244">
    <property type="entry name" value="23SrRNA_methyltr_KL"/>
</dbReference>
<dbReference type="InterPro" id="IPR002052">
    <property type="entry name" value="DNA_methylase_N6_adenine_CS"/>
</dbReference>
<dbReference type="InterPro" id="IPR000241">
    <property type="entry name" value="RlmKL-like_Mtase"/>
</dbReference>
<dbReference type="InterPro" id="IPR053943">
    <property type="entry name" value="RlmKL-like_Mtase_CS"/>
</dbReference>
<dbReference type="InterPro" id="IPR054170">
    <property type="entry name" value="RlmL_1st"/>
</dbReference>
<dbReference type="InterPro" id="IPR019614">
    <property type="entry name" value="SAM-dep_methyl-trfase"/>
</dbReference>
<dbReference type="InterPro" id="IPR029063">
    <property type="entry name" value="SAM-dependent_MTases_sf"/>
</dbReference>
<dbReference type="InterPro" id="IPR004114">
    <property type="entry name" value="THUMP_dom"/>
</dbReference>
<dbReference type="NCBIfam" id="NF008748">
    <property type="entry name" value="PRK11783.1"/>
    <property type="match status" value="1"/>
</dbReference>
<dbReference type="PANTHER" id="PTHR47313">
    <property type="entry name" value="RIBOSOMAL RNA LARGE SUBUNIT METHYLTRANSFERASE K/L"/>
    <property type="match status" value="1"/>
</dbReference>
<dbReference type="PANTHER" id="PTHR47313:SF1">
    <property type="entry name" value="RIBOSOMAL RNA LARGE SUBUNIT METHYLTRANSFERASE K_L"/>
    <property type="match status" value="1"/>
</dbReference>
<dbReference type="Pfam" id="PF10672">
    <property type="entry name" value="Methyltrans_SAM"/>
    <property type="match status" value="1"/>
</dbReference>
<dbReference type="Pfam" id="PF22020">
    <property type="entry name" value="RlmL_1st"/>
    <property type="match status" value="1"/>
</dbReference>
<dbReference type="Pfam" id="PF02926">
    <property type="entry name" value="THUMP"/>
    <property type="match status" value="1"/>
</dbReference>
<dbReference type="Pfam" id="PF01170">
    <property type="entry name" value="UPF0020"/>
    <property type="match status" value="1"/>
</dbReference>
<dbReference type="PIRSF" id="PIRSF037618">
    <property type="entry name" value="RNA_Mtase_bacteria_prd"/>
    <property type="match status" value="1"/>
</dbReference>
<dbReference type="SMART" id="SM00981">
    <property type="entry name" value="THUMP"/>
    <property type="match status" value="1"/>
</dbReference>
<dbReference type="SUPFAM" id="SSF53335">
    <property type="entry name" value="S-adenosyl-L-methionine-dependent methyltransferases"/>
    <property type="match status" value="2"/>
</dbReference>
<dbReference type="PROSITE" id="PS51165">
    <property type="entry name" value="THUMP"/>
    <property type="match status" value="1"/>
</dbReference>
<dbReference type="PROSITE" id="PS01261">
    <property type="entry name" value="UPF0020"/>
    <property type="match status" value="1"/>
</dbReference>
<comment type="function">
    <text evidence="1">Specifically methylates the guanine in position 2445 (m2G2445) and the guanine in position 2069 (m7G2069) of 23S rRNA.</text>
</comment>
<comment type="catalytic activity">
    <reaction evidence="1">
        <text>guanosine(2445) in 23S rRNA + S-adenosyl-L-methionine = N(2)-methylguanosine(2445) in 23S rRNA + S-adenosyl-L-homocysteine + H(+)</text>
        <dbReference type="Rhea" id="RHEA:42740"/>
        <dbReference type="Rhea" id="RHEA-COMP:10215"/>
        <dbReference type="Rhea" id="RHEA-COMP:10216"/>
        <dbReference type="ChEBI" id="CHEBI:15378"/>
        <dbReference type="ChEBI" id="CHEBI:57856"/>
        <dbReference type="ChEBI" id="CHEBI:59789"/>
        <dbReference type="ChEBI" id="CHEBI:74269"/>
        <dbReference type="ChEBI" id="CHEBI:74481"/>
        <dbReference type="EC" id="2.1.1.173"/>
    </reaction>
</comment>
<comment type="catalytic activity">
    <reaction evidence="1">
        <text>guanosine(2069) in 23S rRNA + S-adenosyl-L-methionine = N(2)-methylguanosine(2069) in 23S rRNA + S-adenosyl-L-homocysteine + H(+)</text>
        <dbReference type="Rhea" id="RHEA:43772"/>
        <dbReference type="Rhea" id="RHEA-COMP:10688"/>
        <dbReference type="Rhea" id="RHEA-COMP:10689"/>
        <dbReference type="ChEBI" id="CHEBI:15378"/>
        <dbReference type="ChEBI" id="CHEBI:57856"/>
        <dbReference type="ChEBI" id="CHEBI:59789"/>
        <dbReference type="ChEBI" id="CHEBI:74269"/>
        <dbReference type="ChEBI" id="CHEBI:74481"/>
        <dbReference type="EC" id="2.1.1.264"/>
    </reaction>
</comment>
<comment type="subcellular location">
    <subcellularLocation>
        <location evidence="1">Cytoplasm</location>
    </subcellularLocation>
</comment>
<comment type="similarity">
    <text evidence="1">Belongs to the methyltransferase superfamily. RlmKL family.</text>
</comment>
<accession>Q4QP66</accession>
<gene>
    <name evidence="1" type="primary">rlmL</name>
    <name type="ordered locus">NTHI0203</name>
</gene>
<evidence type="ECO:0000255" key="1">
    <source>
        <dbReference type="HAMAP-Rule" id="MF_01858"/>
    </source>
</evidence>
<organism>
    <name type="scientific">Haemophilus influenzae (strain 86-028NP)</name>
    <dbReference type="NCBI Taxonomy" id="281310"/>
    <lineage>
        <taxon>Bacteria</taxon>
        <taxon>Pseudomonadati</taxon>
        <taxon>Pseudomonadota</taxon>
        <taxon>Gammaproteobacteria</taxon>
        <taxon>Pasteurellales</taxon>
        <taxon>Pasteurellaceae</taxon>
        <taxon>Haemophilus</taxon>
    </lineage>
</organism>
<feature type="chain" id="PRO_0000366760" description="Ribosomal RNA large subunit methyltransferase K/L">
    <location>
        <begin position="1"/>
        <end position="711"/>
    </location>
</feature>
<feature type="domain" description="THUMP" evidence="1">
    <location>
        <begin position="43"/>
        <end position="154"/>
    </location>
</feature>